<proteinExistence type="inferred from homology"/>
<evidence type="ECO:0000255" key="1">
    <source>
        <dbReference type="HAMAP-Rule" id="MF_00530"/>
    </source>
</evidence>
<name>ATPE_XANCB</name>
<accession>B0RWC1</accession>
<protein>
    <recommendedName>
        <fullName evidence="1">ATP synthase epsilon chain</fullName>
    </recommendedName>
    <alternativeName>
        <fullName evidence="1">ATP synthase F1 sector epsilon subunit</fullName>
    </alternativeName>
    <alternativeName>
        <fullName evidence="1">F-ATPase epsilon subunit</fullName>
    </alternativeName>
</protein>
<sequence length="140" mass="15161">MSTIRCDIVSAEQEIFRGEATLVVATGELGELGIAPKHAPLITRLKPGKVVVTTASGEQLDFAISGGILEVQPQVVTVLVDTAIRAQDIDEAAVRKAKEEAERLLANRGDTVDVEQAQRQLAEATVQLQALERLRRTLKH</sequence>
<comment type="function">
    <text evidence="1">Produces ATP from ADP in the presence of a proton gradient across the membrane.</text>
</comment>
<comment type="subunit">
    <text evidence="1">F-type ATPases have 2 components, CF(1) - the catalytic core - and CF(0) - the membrane proton channel. CF(1) has five subunits: alpha(3), beta(3), gamma(1), delta(1), epsilon(1). CF(0) has three main subunits: a, b and c.</text>
</comment>
<comment type="subcellular location">
    <subcellularLocation>
        <location evidence="1">Cell inner membrane</location>
        <topology evidence="1">Peripheral membrane protein</topology>
    </subcellularLocation>
</comment>
<comment type="similarity">
    <text evidence="1">Belongs to the ATPase epsilon chain family.</text>
</comment>
<keyword id="KW-0066">ATP synthesis</keyword>
<keyword id="KW-0997">Cell inner membrane</keyword>
<keyword id="KW-1003">Cell membrane</keyword>
<keyword id="KW-0139">CF(1)</keyword>
<keyword id="KW-0375">Hydrogen ion transport</keyword>
<keyword id="KW-0406">Ion transport</keyword>
<keyword id="KW-0472">Membrane</keyword>
<keyword id="KW-0813">Transport</keyword>
<reference key="1">
    <citation type="journal article" date="2008" name="J. Biotechnol.">
        <title>The genome of Xanthomonas campestris pv. campestris B100 and its use for the reconstruction of metabolic pathways involved in xanthan biosynthesis.</title>
        <authorList>
            <person name="Vorhoelter F.-J."/>
            <person name="Schneiker S."/>
            <person name="Goesmann A."/>
            <person name="Krause L."/>
            <person name="Bekel T."/>
            <person name="Kaiser O."/>
            <person name="Linke B."/>
            <person name="Patschkowski T."/>
            <person name="Rueckert C."/>
            <person name="Schmid J."/>
            <person name="Sidhu V.K."/>
            <person name="Sieber V."/>
            <person name="Tauch A."/>
            <person name="Watt S.A."/>
            <person name="Weisshaar B."/>
            <person name="Becker A."/>
            <person name="Niehaus K."/>
            <person name="Puehler A."/>
        </authorList>
    </citation>
    <scope>NUCLEOTIDE SEQUENCE [LARGE SCALE GENOMIC DNA]</scope>
    <source>
        <strain>B100</strain>
    </source>
</reference>
<gene>
    <name evidence="1" type="primary">atpC</name>
    <name type="ordered locus">xcc-b100_3793</name>
</gene>
<dbReference type="EMBL" id="AM920689">
    <property type="protein sequence ID" value="CAP53160.1"/>
    <property type="molecule type" value="Genomic_DNA"/>
</dbReference>
<dbReference type="SMR" id="B0RWC1"/>
<dbReference type="KEGG" id="xca:xcc-b100_3793"/>
<dbReference type="HOGENOM" id="CLU_084338_2_0_6"/>
<dbReference type="Proteomes" id="UP000001188">
    <property type="component" value="Chromosome"/>
</dbReference>
<dbReference type="GO" id="GO:0005886">
    <property type="term" value="C:plasma membrane"/>
    <property type="evidence" value="ECO:0007669"/>
    <property type="project" value="UniProtKB-SubCell"/>
</dbReference>
<dbReference type="GO" id="GO:0045259">
    <property type="term" value="C:proton-transporting ATP synthase complex"/>
    <property type="evidence" value="ECO:0007669"/>
    <property type="project" value="UniProtKB-KW"/>
</dbReference>
<dbReference type="GO" id="GO:0005524">
    <property type="term" value="F:ATP binding"/>
    <property type="evidence" value="ECO:0007669"/>
    <property type="project" value="UniProtKB-UniRule"/>
</dbReference>
<dbReference type="GO" id="GO:0046933">
    <property type="term" value="F:proton-transporting ATP synthase activity, rotational mechanism"/>
    <property type="evidence" value="ECO:0007669"/>
    <property type="project" value="UniProtKB-UniRule"/>
</dbReference>
<dbReference type="CDD" id="cd12152">
    <property type="entry name" value="F1-ATPase_delta"/>
    <property type="match status" value="1"/>
</dbReference>
<dbReference type="FunFam" id="2.60.15.10:FF:000001">
    <property type="entry name" value="ATP synthase epsilon chain"/>
    <property type="match status" value="1"/>
</dbReference>
<dbReference type="Gene3D" id="1.20.5.440">
    <property type="entry name" value="ATP synthase delta/epsilon subunit, C-terminal domain"/>
    <property type="match status" value="1"/>
</dbReference>
<dbReference type="Gene3D" id="2.60.15.10">
    <property type="entry name" value="F0F1 ATP synthase delta/epsilon subunit, N-terminal"/>
    <property type="match status" value="1"/>
</dbReference>
<dbReference type="HAMAP" id="MF_00530">
    <property type="entry name" value="ATP_synth_epsil_bac"/>
    <property type="match status" value="1"/>
</dbReference>
<dbReference type="InterPro" id="IPR036794">
    <property type="entry name" value="ATP_F1_dsu/esu_C_sf"/>
</dbReference>
<dbReference type="InterPro" id="IPR001469">
    <property type="entry name" value="ATP_synth_F1_dsu/esu"/>
</dbReference>
<dbReference type="InterPro" id="IPR020546">
    <property type="entry name" value="ATP_synth_F1_dsu/esu_N"/>
</dbReference>
<dbReference type="InterPro" id="IPR020547">
    <property type="entry name" value="ATP_synth_F1_esu_C"/>
</dbReference>
<dbReference type="InterPro" id="IPR036771">
    <property type="entry name" value="ATPsynth_dsu/esu_N"/>
</dbReference>
<dbReference type="NCBIfam" id="TIGR01216">
    <property type="entry name" value="ATP_synt_epsi"/>
    <property type="match status" value="1"/>
</dbReference>
<dbReference type="NCBIfam" id="NF001847">
    <property type="entry name" value="PRK00571.1-4"/>
    <property type="match status" value="1"/>
</dbReference>
<dbReference type="PANTHER" id="PTHR13822">
    <property type="entry name" value="ATP SYNTHASE DELTA/EPSILON CHAIN"/>
    <property type="match status" value="1"/>
</dbReference>
<dbReference type="PANTHER" id="PTHR13822:SF10">
    <property type="entry name" value="ATP SYNTHASE EPSILON CHAIN, CHLOROPLASTIC"/>
    <property type="match status" value="1"/>
</dbReference>
<dbReference type="Pfam" id="PF00401">
    <property type="entry name" value="ATP-synt_DE"/>
    <property type="match status" value="1"/>
</dbReference>
<dbReference type="Pfam" id="PF02823">
    <property type="entry name" value="ATP-synt_DE_N"/>
    <property type="match status" value="1"/>
</dbReference>
<dbReference type="SUPFAM" id="SSF46604">
    <property type="entry name" value="Epsilon subunit of F1F0-ATP synthase C-terminal domain"/>
    <property type="match status" value="1"/>
</dbReference>
<dbReference type="SUPFAM" id="SSF51344">
    <property type="entry name" value="Epsilon subunit of F1F0-ATP synthase N-terminal domain"/>
    <property type="match status" value="1"/>
</dbReference>
<feature type="chain" id="PRO_1000127907" description="ATP synthase epsilon chain">
    <location>
        <begin position="1"/>
        <end position="140"/>
    </location>
</feature>
<organism>
    <name type="scientific">Xanthomonas campestris pv. campestris (strain B100)</name>
    <dbReference type="NCBI Taxonomy" id="509169"/>
    <lineage>
        <taxon>Bacteria</taxon>
        <taxon>Pseudomonadati</taxon>
        <taxon>Pseudomonadota</taxon>
        <taxon>Gammaproteobacteria</taxon>
        <taxon>Lysobacterales</taxon>
        <taxon>Lysobacteraceae</taxon>
        <taxon>Xanthomonas</taxon>
    </lineage>
</organism>